<name>CWP22_ARATH</name>
<reference evidence="3" key="1">
    <citation type="journal article" date="1997" name="J. Biol. Chem.">
        <title>Differential extraction and protein sequencing reveals major differences in patterns of primary cell wall proteins from plants.</title>
        <authorList>
            <person name="Robertson D."/>
            <person name="Mitchell G.P."/>
            <person name="Gilroy J.S."/>
            <person name="Gerrish C."/>
            <person name="Bolwell G.P."/>
            <person name="Slabas A.R."/>
        </authorList>
    </citation>
    <scope>PROTEIN SEQUENCE</scope>
    <scope>SUBCELLULAR LOCATION</scope>
    <source>
        <strain>cv. Landsberg erecta</strain>
    </source>
</reference>
<accession>P80843</accession>
<comment type="subcellular location">
    <subcellularLocation>
        <location evidence="1">Secreted</location>
        <location evidence="1">Cell wall</location>
    </subcellularLocation>
</comment>
<proteinExistence type="evidence at protein level"/>
<dbReference type="GO" id="GO:0005576">
    <property type="term" value="C:extracellular region"/>
    <property type="evidence" value="ECO:0007669"/>
    <property type="project" value="UniProtKB-KW"/>
</dbReference>
<organism>
    <name type="scientific">Arabidopsis thaliana</name>
    <name type="common">Mouse-ear cress</name>
    <dbReference type="NCBI Taxonomy" id="3702"/>
    <lineage>
        <taxon>Eukaryota</taxon>
        <taxon>Viridiplantae</taxon>
        <taxon>Streptophyta</taxon>
        <taxon>Embryophyta</taxon>
        <taxon>Tracheophyta</taxon>
        <taxon>Spermatophyta</taxon>
        <taxon>Magnoliopsida</taxon>
        <taxon>eudicotyledons</taxon>
        <taxon>Gunneridae</taxon>
        <taxon>Pentapetalae</taxon>
        <taxon>rosids</taxon>
        <taxon>malvids</taxon>
        <taxon>Brassicales</taxon>
        <taxon>Brassicaceae</taxon>
        <taxon>Camelineae</taxon>
        <taxon>Arabidopsis</taxon>
    </lineage>
</organism>
<evidence type="ECO:0000269" key="1">
    <source>
    </source>
</evidence>
<evidence type="ECO:0000303" key="2">
    <source>
    </source>
</evidence>
<evidence type="ECO:0000305" key="3"/>
<sequence>AVPPRYGYTRG</sequence>
<protein>
    <recommendedName>
        <fullName>68 kDa cell wall protein</fullName>
    </recommendedName>
</protein>
<feature type="chain" id="PRO_0000079696" description="68 kDa cell wall protein">
    <location>
        <begin position="1"/>
        <end position="11" status="greater than"/>
    </location>
</feature>
<feature type="non-terminal residue" evidence="2">
    <location>
        <position position="11"/>
    </location>
</feature>
<keyword id="KW-0134">Cell wall</keyword>
<keyword id="KW-0903">Direct protein sequencing</keyword>
<keyword id="KW-0964">Secreted</keyword>